<evidence type="ECO:0000255" key="1">
    <source>
        <dbReference type="PROSITE-ProRule" id="PRU00541"/>
    </source>
</evidence>
<evidence type="ECO:0000255" key="2">
    <source>
        <dbReference type="PROSITE-ProRule" id="PRU00542"/>
    </source>
</evidence>
<evidence type="ECO:0000256" key="3">
    <source>
        <dbReference type="SAM" id="MobiDB-lite"/>
    </source>
</evidence>
<evidence type="ECO:0000269" key="4">
    <source>
    </source>
</evidence>
<evidence type="ECO:0000269" key="5">
    <source>
    </source>
</evidence>
<evidence type="ECO:0000305" key="6"/>
<keyword id="KW-0067">ATP-binding</keyword>
<keyword id="KW-0903">Direct protein sequencing</keyword>
<keyword id="KW-0238">DNA-binding</keyword>
<keyword id="KW-0347">Helicase</keyword>
<keyword id="KW-0378">Hydrolase</keyword>
<keyword id="KW-0547">Nucleotide-binding</keyword>
<keyword id="KW-0539">Nucleus</keyword>
<keyword id="KW-0597">Phosphoprotein</keyword>
<keyword id="KW-1185">Reference proteome</keyword>
<keyword id="KW-0804">Transcription</keyword>
<keyword id="KW-0805">Transcription regulation</keyword>
<keyword id="KW-0806">Transcription termination</keyword>
<proteinExistence type="evidence at protein level"/>
<protein>
    <recommendedName>
        <fullName>Transcription termination factor 2</fullName>
        <ecNumber>3.6.4.-</ecNumber>
    </recommendedName>
    <alternativeName>
        <fullName>Protein lodestar</fullName>
    </alternativeName>
    <alternativeName>
        <fullName>RNA polymerase II termination factor</fullName>
    </alternativeName>
    <alternativeName>
        <fullName>Transcription release factor 2</fullName>
    </alternativeName>
</protein>
<dbReference type="EC" id="3.6.4.-"/>
<dbReference type="EMBL" id="X62629">
    <property type="protein sequence ID" value="CAA44496.1"/>
    <property type="status" value="ALT_FRAME"/>
    <property type="molecule type" value="mRNA"/>
</dbReference>
<dbReference type="EMBL" id="AE014297">
    <property type="protein sequence ID" value="AAF54167.1"/>
    <property type="molecule type" value="Genomic_DNA"/>
</dbReference>
<dbReference type="PIR" id="A40580">
    <property type="entry name" value="A40580"/>
</dbReference>
<dbReference type="RefSeq" id="NP_524850.2">
    <property type="nucleotide sequence ID" value="NM_080111.4"/>
</dbReference>
<dbReference type="SMR" id="P34739"/>
<dbReference type="BioGRID" id="69962">
    <property type="interactions" value="10"/>
</dbReference>
<dbReference type="DIP" id="DIP-20026N"/>
<dbReference type="FunCoup" id="P34739">
    <property type="interactions" value="1750"/>
</dbReference>
<dbReference type="IntAct" id="P34739">
    <property type="interactions" value="6"/>
</dbReference>
<dbReference type="MINT" id="P34739"/>
<dbReference type="STRING" id="7227.FBpp0081255"/>
<dbReference type="GlyGen" id="P34739">
    <property type="glycosylation" value="1 site"/>
</dbReference>
<dbReference type="iPTMnet" id="P34739"/>
<dbReference type="PaxDb" id="7227-FBpp0081255"/>
<dbReference type="EnsemblMetazoa" id="FBtr0081758">
    <property type="protein sequence ID" value="FBpp0081255"/>
    <property type="gene ID" value="FBgn0002542"/>
</dbReference>
<dbReference type="GeneID" id="45894"/>
<dbReference type="KEGG" id="dme:Dmel_CG2684"/>
<dbReference type="AGR" id="FB:FBgn0002542"/>
<dbReference type="CTD" id="45894"/>
<dbReference type="FlyBase" id="FBgn0002542">
    <property type="gene designation" value="lds"/>
</dbReference>
<dbReference type="VEuPathDB" id="VectorBase:FBgn0002542"/>
<dbReference type="eggNOG" id="KOG4439">
    <property type="taxonomic scope" value="Eukaryota"/>
</dbReference>
<dbReference type="GeneTree" id="ENSGT00940000162718"/>
<dbReference type="HOGENOM" id="CLU_000315_2_9_1"/>
<dbReference type="InParanoid" id="P34739"/>
<dbReference type="OMA" id="NVYQKVM"/>
<dbReference type="OrthoDB" id="423559at2759"/>
<dbReference type="PhylomeDB" id="P34739"/>
<dbReference type="SignaLink" id="P34739"/>
<dbReference type="BioGRID-ORCS" id="45894">
    <property type="hits" value="1 hit in 3 CRISPR screens"/>
</dbReference>
<dbReference type="GenomeRNAi" id="45894"/>
<dbReference type="PRO" id="PR:P34739"/>
<dbReference type="Proteomes" id="UP000000803">
    <property type="component" value="Chromosome 3R"/>
</dbReference>
<dbReference type="Bgee" id="FBgn0002542">
    <property type="expression patterns" value="Expressed in secondary oocyte and 57 other cell types or tissues"/>
</dbReference>
<dbReference type="ExpressionAtlas" id="P34739">
    <property type="expression patterns" value="baseline and differential"/>
</dbReference>
<dbReference type="GO" id="GO:0005737">
    <property type="term" value="C:cytoplasm"/>
    <property type="evidence" value="ECO:0000314"/>
    <property type="project" value="FlyBase"/>
</dbReference>
<dbReference type="GO" id="GO:0005634">
    <property type="term" value="C:nucleus"/>
    <property type="evidence" value="ECO:0000314"/>
    <property type="project" value="FlyBase"/>
</dbReference>
<dbReference type="GO" id="GO:0005524">
    <property type="term" value="F:ATP binding"/>
    <property type="evidence" value="ECO:0007669"/>
    <property type="project" value="UniProtKB-KW"/>
</dbReference>
<dbReference type="GO" id="GO:0016887">
    <property type="term" value="F:ATP hydrolysis activity"/>
    <property type="evidence" value="ECO:0000314"/>
    <property type="project" value="FlyBase"/>
</dbReference>
<dbReference type="GO" id="GO:0008094">
    <property type="term" value="F:ATP-dependent activity, acting on DNA"/>
    <property type="evidence" value="ECO:0000314"/>
    <property type="project" value="FlyBase"/>
</dbReference>
<dbReference type="GO" id="GO:0140658">
    <property type="term" value="F:ATP-dependent chromatin remodeler activity"/>
    <property type="evidence" value="ECO:0000303"/>
    <property type="project" value="FlyBase"/>
</dbReference>
<dbReference type="GO" id="GO:0003677">
    <property type="term" value="F:DNA binding"/>
    <property type="evidence" value="ECO:0007669"/>
    <property type="project" value="UniProtKB-KW"/>
</dbReference>
<dbReference type="GO" id="GO:0004386">
    <property type="term" value="F:helicase activity"/>
    <property type="evidence" value="ECO:0007669"/>
    <property type="project" value="UniProtKB-KW"/>
</dbReference>
<dbReference type="GO" id="GO:0006281">
    <property type="term" value="P:DNA repair"/>
    <property type="evidence" value="ECO:0000318"/>
    <property type="project" value="GO_Central"/>
</dbReference>
<dbReference type="GO" id="GO:0006353">
    <property type="term" value="P:DNA-templated transcription termination"/>
    <property type="evidence" value="ECO:0000314"/>
    <property type="project" value="FlyBase"/>
</dbReference>
<dbReference type="GO" id="GO:0007143">
    <property type="term" value="P:female meiotic nuclear division"/>
    <property type="evidence" value="ECO:0000315"/>
    <property type="project" value="FlyBase"/>
</dbReference>
<dbReference type="GO" id="GO:0034454">
    <property type="term" value="P:microtubule anchoring at centrosome"/>
    <property type="evidence" value="ECO:0000315"/>
    <property type="project" value="FlyBase"/>
</dbReference>
<dbReference type="GO" id="GO:0007283">
    <property type="term" value="P:spermatogenesis"/>
    <property type="evidence" value="ECO:0000315"/>
    <property type="project" value="FlyBase"/>
</dbReference>
<dbReference type="CDD" id="cd18072">
    <property type="entry name" value="DEXHc_TTF2"/>
    <property type="match status" value="1"/>
</dbReference>
<dbReference type="CDD" id="cd18793">
    <property type="entry name" value="SF2_C_SNF"/>
    <property type="match status" value="1"/>
</dbReference>
<dbReference type="FunFam" id="3.40.50.10810:FF:000043">
    <property type="entry name" value="Transcription termination factor 2"/>
    <property type="match status" value="1"/>
</dbReference>
<dbReference type="Gene3D" id="3.40.50.300">
    <property type="entry name" value="P-loop containing nucleotide triphosphate hydrolases"/>
    <property type="match status" value="1"/>
</dbReference>
<dbReference type="Gene3D" id="3.40.50.10810">
    <property type="entry name" value="Tandem AAA-ATPase domain"/>
    <property type="match status" value="1"/>
</dbReference>
<dbReference type="InterPro" id="IPR014001">
    <property type="entry name" value="Helicase_ATP-bd"/>
</dbReference>
<dbReference type="InterPro" id="IPR001650">
    <property type="entry name" value="Helicase_C-like"/>
</dbReference>
<dbReference type="InterPro" id="IPR027417">
    <property type="entry name" value="P-loop_NTPase"/>
</dbReference>
<dbReference type="InterPro" id="IPR038718">
    <property type="entry name" value="SNF2-like_sf"/>
</dbReference>
<dbReference type="InterPro" id="IPR049730">
    <property type="entry name" value="SNF2/RAD54-like_C"/>
</dbReference>
<dbReference type="InterPro" id="IPR000330">
    <property type="entry name" value="SNF2_N"/>
</dbReference>
<dbReference type="InterPro" id="IPR050628">
    <property type="entry name" value="SNF2_RAD54_helicase_TF"/>
</dbReference>
<dbReference type="PANTHER" id="PTHR45626:SF50">
    <property type="entry name" value="TRANSCRIPTION TERMINATION FACTOR 2"/>
    <property type="match status" value="1"/>
</dbReference>
<dbReference type="PANTHER" id="PTHR45626">
    <property type="entry name" value="TRANSCRIPTION TERMINATION FACTOR 2-RELATED"/>
    <property type="match status" value="1"/>
</dbReference>
<dbReference type="Pfam" id="PF00271">
    <property type="entry name" value="Helicase_C"/>
    <property type="match status" value="1"/>
</dbReference>
<dbReference type="Pfam" id="PF00176">
    <property type="entry name" value="SNF2-rel_dom"/>
    <property type="match status" value="1"/>
</dbReference>
<dbReference type="SMART" id="SM00487">
    <property type="entry name" value="DEXDc"/>
    <property type="match status" value="1"/>
</dbReference>
<dbReference type="SMART" id="SM00490">
    <property type="entry name" value="HELICc"/>
    <property type="match status" value="1"/>
</dbReference>
<dbReference type="SUPFAM" id="SSF52540">
    <property type="entry name" value="P-loop containing nucleoside triphosphate hydrolases"/>
    <property type="match status" value="2"/>
</dbReference>
<dbReference type="PROSITE" id="PS51192">
    <property type="entry name" value="HELICASE_ATP_BIND_1"/>
    <property type="match status" value="1"/>
</dbReference>
<dbReference type="PROSITE" id="PS51194">
    <property type="entry name" value="HELICASE_CTER"/>
    <property type="match status" value="1"/>
</dbReference>
<gene>
    <name type="primary">lds</name>
    <name type="ORF">CG2684</name>
</gene>
<name>TTF2_DROME</name>
<sequence>MSSENSEYYSDKEEDSVVNNSSLGRSRKSSRLSKSSRLSKSSRPSSAGVVIDETQSEEEESQSSETAESEKSDESDNSQNSQESEDSEDDSVRPSARNTKRKPLGIPSDSEDEEDELEQRALSPSTRMSITGVRPQDLSDDDSEIEYSDEVQEGPTEAPTAEAVVPRYTTQFAGNIQNDLHSTIGAADSEVLDDSSGSDVLILSNKETPIEILSSTDDDATTNKENMSGPPFERPSKSLSPRSSAGASVVKTSKNLSQPTIQAVLKQKTSPAAPRRSRIKSEDQKVVSQVVYDEEMRKLAEKRVQVSDAEKLFEKVAHKLPDKGSQIMKRIDTLRRELAMDEQWISALRVQQSNVPAVRVVKPTLNPPRAPSIDTLDWDELSEAVNEIKPVYTGAQGMATFNNQKALTLESLKDLHVSLEDLPGPEVLAEDPVGLKVSLMNHQKHALAWMSWRERKLPRGGILADDMGLGKTLTMISSVLACKNGQEMSEGKDESSDSDSEDDKNKKRKSVTGWKSKGRKDTRRGGTLVVCPASLLRQWESEVESKVSRQKLTVCVHHGNNRETKGKYLRDYDIVVTTYQIVAREHKSLSAVFGVKWRRIILDEAHVVRNHKSQSSLAVCDLRGKYRWALTGTPIQNKELDVYALLKFLRCSPFDDLHTWKKWIDNKSAGGQNRLNLLMKSLMLRRTKAQLQSDGKLNSLPNKELRLIEISLDKEEMNVYQTVMTYSRTLFAQFLHQRAERETDFNYRSDANKPTYNQIKDPNGAYYKMHEKFARMAGSKKEVKSHDILVLLLRLRQICCHPGLIDAMLDGEESQTMGDHSSDSDTPEIDLLAQLNKLAITDTSTDGQQSVANAGDDGPPLLPDEARIAKASKNLLKRSNPVFNLHRPSSKINMVIQILKTSILKSSDDKAIVVSQWTSVLDILRDHLSKDGVATLSLNGTIPVKNRQDIVNEFNDRNNQKRVLLLSLTAGGVGLNLIGANHLLLLDLHWNPQLEAQAQDRIYRVGQKKNVIIYKFMCVDTVEQRIKGLQDKKLDLADGVLTGAKVSSKLTIDDLKGLFGM</sequence>
<feature type="chain" id="PRO_0000074378" description="Transcription termination factor 2">
    <location>
        <begin position="1"/>
        <end position="1061"/>
    </location>
</feature>
<feature type="domain" description="Helicase ATP-binding" evidence="1">
    <location>
        <begin position="452"/>
        <end position="652"/>
    </location>
</feature>
<feature type="domain" description="Helicase C-terminal" evidence="2">
    <location>
        <begin position="891"/>
        <end position="1056"/>
    </location>
</feature>
<feature type="region of interest" description="Disordered" evidence="3">
    <location>
        <begin position="1"/>
        <end position="163"/>
    </location>
</feature>
<feature type="region of interest" description="Disordered" evidence="3">
    <location>
        <begin position="212"/>
        <end position="253"/>
    </location>
</feature>
<feature type="region of interest" description="Disordered" evidence="3">
    <location>
        <begin position="485"/>
        <end position="523"/>
    </location>
</feature>
<feature type="short sequence motif" description="DEAH box">
    <location>
        <begin position="603"/>
        <end position="606"/>
    </location>
</feature>
<feature type="compositionally biased region" description="Low complexity" evidence="3">
    <location>
        <begin position="32"/>
        <end position="46"/>
    </location>
</feature>
<feature type="compositionally biased region" description="Acidic residues" evidence="3">
    <location>
        <begin position="138"/>
        <end position="152"/>
    </location>
</feature>
<feature type="compositionally biased region" description="Polar residues" evidence="3">
    <location>
        <begin position="237"/>
        <end position="253"/>
    </location>
</feature>
<feature type="compositionally biased region" description="Basic residues" evidence="3">
    <location>
        <begin position="506"/>
        <end position="522"/>
    </location>
</feature>
<feature type="binding site" evidence="1">
    <location>
        <begin position="465"/>
        <end position="472"/>
    </location>
    <ligand>
        <name>ATP</name>
        <dbReference type="ChEBI" id="CHEBI:30616"/>
    </ligand>
</feature>
<feature type="modified residue" description="Phosphoserine" evidence="4">
    <location>
        <position position="108"/>
    </location>
</feature>
<feature type="modified residue" description="Phosphoserine" evidence="4">
    <location>
        <position position="110"/>
    </location>
</feature>
<feature type="modified residue" description="Phosphoserine" evidence="4">
    <location>
        <position position="214"/>
    </location>
</feature>
<feature type="modified residue" description="Phosphoserine" evidence="4">
    <location>
        <position position="215"/>
    </location>
</feature>
<feature type="modified residue" description="Phosphothreonine" evidence="4">
    <location>
        <position position="216"/>
    </location>
</feature>
<feature type="sequence conflict" description="In Ref. 1; CAA44496." evidence="6" ref="1">
    <original>R</original>
    <variation>G</variation>
    <location>
        <position position="167"/>
    </location>
</feature>
<organism>
    <name type="scientific">Drosophila melanogaster</name>
    <name type="common">Fruit fly</name>
    <dbReference type="NCBI Taxonomy" id="7227"/>
    <lineage>
        <taxon>Eukaryota</taxon>
        <taxon>Metazoa</taxon>
        <taxon>Ecdysozoa</taxon>
        <taxon>Arthropoda</taxon>
        <taxon>Hexapoda</taxon>
        <taxon>Insecta</taxon>
        <taxon>Pterygota</taxon>
        <taxon>Neoptera</taxon>
        <taxon>Endopterygota</taxon>
        <taxon>Diptera</taxon>
        <taxon>Brachycera</taxon>
        <taxon>Muscomorpha</taxon>
        <taxon>Ephydroidea</taxon>
        <taxon>Drosophilidae</taxon>
        <taxon>Drosophila</taxon>
        <taxon>Sophophora</taxon>
    </lineage>
</organism>
<reference key="1">
    <citation type="journal article" date="1991" name="Genes Dev.">
        <title>Chromosome tangling and breakage at anaphase result from mutations in lodestar, a Drosophila gene encoding a putative nucleoside triphosphate-binding protein.</title>
        <authorList>
            <person name="Girdham C.G."/>
            <person name="Glover D.M."/>
        </authorList>
    </citation>
    <scope>NUCLEOTIDE SEQUENCE [MRNA]</scope>
</reference>
<reference key="2">
    <citation type="journal article" date="2000" name="Science">
        <title>The genome sequence of Drosophila melanogaster.</title>
        <authorList>
            <person name="Adams M.D."/>
            <person name="Celniker S.E."/>
            <person name="Holt R.A."/>
            <person name="Evans C.A."/>
            <person name="Gocayne J.D."/>
            <person name="Amanatides P.G."/>
            <person name="Scherer S.E."/>
            <person name="Li P.W."/>
            <person name="Hoskins R.A."/>
            <person name="Galle R.F."/>
            <person name="George R.A."/>
            <person name="Lewis S.E."/>
            <person name="Richards S."/>
            <person name="Ashburner M."/>
            <person name="Henderson S.N."/>
            <person name="Sutton G.G."/>
            <person name="Wortman J.R."/>
            <person name="Yandell M.D."/>
            <person name="Zhang Q."/>
            <person name="Chen L.X."/>
            <person name="Brandon R.C."/>
            <person name="Rogers Y.-H.C."/>
            <person name="Blazej R.G."/>
            <person name="Champe M."/>
            <person name="Pfeiffer B.D."/>
            <person name="Wan K.H."/>
            <person name="Doyle C."/>
            <person name="Baxter E.G."/>
            <person name="Helt G."/>
            <person name="Nelson C.R."/>
            <person name="Miklos G.L.G."/>
            <person name="Abril J.F."/>
            <person name="Agbayani A."/>
            <person name="An H.-J."/>
            <person name="Andrews-Pfannkoch C."/>
            <person name="Baldwin D."/>
            <person name="Ballew R.M."/>
            <person name="Basu A."/>
            <person name="Baxendale J."/>
            <person name="Bayraktaroglu L."/>
            <person name="Beasley E.M."/>
            <person name="Beeson K.Y."/>
            <person name="Benos P.V."/>
            <person name="Berman B.P."/>
            <person name="Bhandari D."/>
            <person name="Bolshakov S."/>
            <person name="Borkova D."/>
            <person name="Botchan M.R."/>
            <person name="Bouck J."/>
            <person name="Brokstein P."/>
            <person name="Brottier P."/>
            <person name="Burtis K.C."/>
            <person name="Busam D.A."/>
            <person name="Butler H."/>
            <person name="Cadieu E."/>
            <person name="Center A."/>
            <person name="Chandra I."/>
            <person name="Cherry J.M."/>
            <person name="Cawley S."/>
            <person name="Dahlke C."/>
            <person name="Davenport L.B."/>
            <person name="Davies P."/>
            <person name="de Pablos B."/>
            <person name="Delcher A."/>
            <person name="Deng Z."/>
            <person name="Mays A.D."/>
            <person name="Dew I."/>
            <person name="Dietz S.M."/>
            <person name="Dodson K."/>
            <person name="Doup L.E."/>
            <person name="Downes M."/>
            <person name="Dugan-Rocha S."/>
            <person name="Dunkov B.C."/>
            <person name="Dunn P."/>
            <person name="Durbin K.J."/>
            <person name="Evangelista C.C."/>
            <person name="Ferraz C."/>
            <person name="Ferriera S."/>
            <person name="Fleischmann W."/>
            <person name="Fosler C."/>
            <person name="Gabrielian A.E."/>
            <person name="Garg N.S."/>
            <person name="Gelbart W.M."/>
            <person name="Glasser K."/>
            <person name="Glodek A."/>
            <person name="Gong F."/>
            <person name="Gorrell J.H."/>
            <person name="Gu Z."/>
            <person name="Guan P."/>
            <person name="Harris M."/>
            <person name="Harris N.L."/>
            <person name="Harvey D.A."/>
            <person name="Heiman T.J."/>
            <person name="Hernandez J.R."/>
            <person name="Houck J."/>
            <person name="Hostin D."/>
            <person name="Houston K.A."/>
            <person name="Howland T.J."/>
            <person name="Wei M.-H."/>
            <person name="Ibegwam C."/>
            <person name="Jalali M."/>
            <person name="Kalush F."/>
            <person name="Karpen G.H."/>
            <person name="Ke Z."/>
            <person name="Kennison J.A."/>
            <person name="Ketchum K.A."/>
            <person name="Kimmel B.E."/>
            <person name="Kodira C.D."/>
            <person name="Kraft C.L."/>
            <person name="Kravitz S."/>
            <person name="Kulp D."/>
            <person name="Lai Z."/>
            <person name="Lasko P."/>
            <person name="Lei Y."/>
            <person name="Levitsky A.A."/>
            <person name="Li J.H."/>
            <person name="Li Z."/>
            <person name="Liang Y."/>
            <person name="Lin X."/>
            <person name="Liu X."/>
            <person name="Mattei B."/>
            <person name="McIntosh T.C."/>
            <person name="McLeod M.P."/>
            <person name="McPherson D."/>
            <person name="Merkulov G."/>
            <person name="Milshina N.V."/>
            <person name="Mobarry C."/>
            <person name="Morris J."/>
            <person name="Moshrefi A."/>
            <person name="Mount S.M."/>
            <person name="Moy M."/>
            <person name="Murphy B."/>
            <person name="Murphy L."/>
            <person name="Muzny D.M."/>
            <person name="Nelson D.L."/>
            <person name="Nelson D.R."/>
            <person name="Nelson K.A."/>
            <person name="Nixon K."/>
            <person name="Nusskern D.R."/>
            <person name="Pacleb J.M."/>
            <person name="Palazzolo M."/>
            <person name="Pittman G.S."/>
            <person name="Pan S."/>
            <person name="Pollard J."/>
            <person name="Puri V."/>
            <person name="Reese M.G."/>
            <person name="Reinert K."/>
            <person name="Remington K."/>
            <person name="Saunders R.D.C."/>
            <person name="Scheeler F."/>
            <person name="Shen H."/>
            <person name="Shue B.C."/>
            <person name="Siden-Kiamos I."/>
            <person name="Simpson M."/>
            <person name="Skupski M.P."/>
            <person name="Smith T.J."/>
            <person name="Spier E."/>
            <person name="Spradling A.C."/>
            <person name="Stapleton M."/>
            <person name="Strong R."/>
            <person name="Sun E."/>
            <person name="Svirskas R."/>
            <person name="Tector C."/>
            <person name="Turner R."/>
            <person name="Venter E."/>
            <person name="Wang A.H."/>
            <person name="Wang X."/>
            <person name="Wang Z.-Y."/>
            <person name="Wassarman D.A."/>
            <person name="Weinstock G.M."/>
            <person name="Weissenbach J."/>
            <person name="Williams S.M."/>
            <person name="Woodage T."/>
            <person name="Worley K.C."/>
            <person name="Wu D."/>
            <person name="Yang S."/>
            <person name="Yao Q.A."/>
            <person name="Ye J."/>
            <person name="Yeh R.-F."/>
            <person name="Zaveri J.S."/>
            <person name="Zhan M."/>
            <person name="Zhang G."/>
            <person name="Zhao Q."/>
            <person name="Zheng L."/>
            <person name="Zheng X.H."/>
            <person name="Zhong F.N."/>
            <person name="Zhong W."/>
            <person name="Zhou X."/>
            <person name="Zhu S.C."/>
            <person name="Zhu X."/>
            <person name="Smith H.O."/>
            <person name="Gibbs R.A."/>
            <person name="Myers E.W."/>
            <person name="Rubin G.M."/>
            <person name="Venter J.C."/>
        </authorList>
    </citation>
    <scope>NUCLEOTIDE SEQUENCE [LARGE SCALE GENOMIC DNA]</scope>
    <source>
        <strain>Berkeley</strain>
    </source>
</reference>
<reference key="3">
    <citation type="journal article" date="2002" name="Genome Biol.">
        <title>Annotation of the Drosophila melanogaster euchromatic genome: a systematic review.</title>
        <authorList>
            <person name="Misra S."/>
            <person name="Crosby M.A."/>
            <person name="Mungall C.J."/>
            <person name="Matthews B.B."/>
            <person name="Campbell K.S."/>
            <person name="Hradecky P."/>
            <person name="Huang Y."/>
            <person name="Kaminker J.S."/>
            <person name="Millburn G.H."/>
            <person name="Prochnik S.E."/>
            <person name="Smith C.D."/>
            <person name="Tupy J.L."/>
            <person name="Whitfield E.J."/>
            <person name="Bayraktaroglu L."/>
            <person name="Berman B.P."/>
            <person name="Bettencourt B.R."/>
            <person name="Celniker S.E."/>
            <person name="de Grey A.D.N.J."/>
            <person name="Drysdale R.A."/>
            <person name="Harris N.L."/>
            <person name="Richter J."/>
            <person name="Russo S."/>
            <person name="Schroeder A.J."/>
            <person name="Shu S.Q."/>
            <person name="Stapleton M."/>
            <person name="Yamada C."/>
            <person name="Ashburner M."/>
            <person name="Gelbart W.M."/>
            <person name="Rubin G.M."/>
            <person name="Lewis S.E."/>
        </authorList>
    </citation>
    <scope>GENOME REANNOTATION</scope>
    <source>
        <strain>Berkeley</strain>
    </source>
</reference>
<reference key="4">
    <citation type="journal article" date="1998" name="J. Biol. Chem.">
        <title>A human RNA polymerase II transcription termination factor is a SWI2/SNF2 family member.</title>
        <authorList>
            <person name="Liu M."/>
            <person name="Xie Z."/>
            <person name="Price D.H."/>
        </authorList>
    </citation>
    <scope>PROTEIN SEQUENCE OF 255-266; 626-638 AND 1033-1045</scope>
    <scope>FUNCTION</scope>
</reference>
<reference key="5">
    <citation type="journal article" date="2008" name="J. Proteome Res.">
        <title>Phosphoproteome analysis of Drosophila melanogaster embryos.</title>
        <authorList>
            <person name="Zhai B."/>
            <person name="Villen J."/>
            <person name="Beausoleil S.A."/>
            <person name="Mintseris J."/>
            <person name="Gygi S.P."/>
        </authorList>
    </citation>
    <scope>PHOSPHORYLATION [LARGE SCALE ANALYSIS] AT SER-108; SER-110; SER-214; SER-215 AND THR-216</scope>
    <scope>IDENTIFICATION BY MASS SPECTROMETRY</scope>
    <source>
        <tissue>Embryo</tissue>
    </source>
</reference>
<comment type="function">
    <text evidence="5">DsDNA-dependent ATPase which acts as a transcription termination factor by coupling ATP hydrolysis with removal of RNA polymerase II from the DNA template.</text>
</comment>
<comment type="subcellular location">
    <subcellularLocation>
        <location evidence="6">Nucleus</location>
    </subcellularLocation>
</comment>
<comment type="similarity">
    <text evidence="6">Belongs to the SNF2/RAD54 helicase family.</text>
</comment>
<comment type="sequence caution" evidence="6">
    <conflict type="frameshift">
        <sequence resource="EMBL-CDS" id="CAA44496"/>
    </conflict>
</comment>
<accession>P34739</accession>
<accession>Q9VHY1</accession>